<dbReference type="PIR" id="C27620">
    <property type="entry name" value="VGXR37"/>
</dbReference>
<dbReference type="SMR" id="P11852"/>
<dbReference type="GO" id="GO:0044166">
    <property type="term" value="C:host cell endoplasmic reticulum lumen"/>
    <property type="evidence" value="ECO:0007669"/>
    <property type="project" value="UniProtKB-SubCell"/>
</dbReference>
<dbReference type="GO" id="GO:0039621">
    <property type="term" value="C:T=13 icosahedral viral capsid"/>
    <property type="evidence" value="ECO:0007669"/>
    <property type="project" value="UniProtKB-UniRule"/>
</dbReference>
<dbReference type="GO" id="GO:0039624">
    <property type="term" value="C:viral outer capsid"/>
    <property type="evidence" value="ECO:0007669"/>
    <property type="project" value="UniProtKB-UniRule"/>
</dbReference>
<dbReference type="GO" id="GO:0046872">
    <property type="term" value="F:metal ion binding"/>
    <property type="evidence" value="ECO:0007669"/>
    <property type="project" value="UniProtKB-KW"/>
</dbReference>
<dbReference type="Gene3D" id="3.40.50.11130">
    <property type="entry name" value="Glycoprotein VP7, domain 1"/>
    <property type="match status" value="1"/>
</dbReference>
<dbReference type="Gene3D" id="2.60.120.800">
    <property type="entry name" value="Rotavirus outer-layer protein VP7, domain 2"/>
    <property type="match status" value="1"/>
</dbReference>
<dbReference type="HAMAP" id="MF_04130">
    <property type="entry name" value="Rota_VP7"/>
    <property type="match status" value="1"/>
</dbReference>
<dbReference type="HAMAP" id="MF_04131">
    <property type="entry name" value="Rota_VP7_A"/>
    <property type="match status" value="1"/>
</dbReference>
<dbReference type="InterPro" id="IPR001963">
    <property type="entry name" value="VP7"/>
</dbReference>
<dbReference type="InterPro" id="IPR042207">
    <property type="entry name" value="VP7_1"/>
</dbReference>
<dbReference type="InterPro" id="IPR042210">
    <property type="entry name" value="VP7_2"/>
</dbReference>
<dbReference type="Pfam" id="PF00434">
    <property type="entry name" value="VP7"/>
    <property type="match status" value="1"/>
</dbReference>
<sequence>MYGIEYTTILIFLISVILLNYILKSVTRIMDYIIYRSLLITVALFALTRAQNYGLNLPITGSMDTIYANSTREGIFLTSTLCLYYPTEASTQISDGEWKDSLSQMFLTKGWPTGSVYFKEYSSIVDFSVDPQLYCDYNLVLMKYDQNLELDMSELADLILNEWLCNPMDITLYYYQQSGESNKWISMGSSCTVKVCPLNTQTLGIGCRTTNVDSFEMVAENEKLAIVDVVDGINHKINLTTTTCTIRNCKKLGPRENVAVIQVGGSNVLDITADPTTNPQTERMMRVNWKRWWQVFYTIVDYINQIVQVMSKRSRSLNSAAFYYRV</sequence>
<keyword id="KW-0024">Alternative initiation</keyword>
<keyword id="KW-0106">Calcium</keyword>
<keyword id="KW-0167">Capsid protein</keyword>
<keyword id="KW-1015">Disulfide bond</keyword>
<keyword id="KW-0325">Glycoprotein</keyword>
<keyword id="KW-1038">Host endoplasmic reticulum</keyword>
<keyword id="KW-0945">Host-virus interaction</keyword>
<keyword id="KW-0479">Metal-binding</keyword>
<keyword id="KW-1152">Outer capsid protein</keyword>
<keyword id="KW-0732">Signal</keyword>
<keyword id="KW-1146">T=13 icosahedral capsid protein</keyword>
<keyword id="KW-0946">Virion</keyword>
<organismHost>
    <name type="scientific">Homo sapiens</name>
    <name type="common">Human</name>
    <dbReference type="NCBI Taxonomy" id="9606"/>
</organismHost>
<protein>
    <recommendedName>
        <fullName evidence="2">Outer capsid glycoprotein VP7</fullName>
    </recommendedName>
</protein>
<evidence type="ECO:0000255" key="1"/>
<evidence type="ECO:0000255" key="2">
    <source>
        <dbReference type="HAMAP-Rule" id="MF_04131"/>
    </source>
</evidence>
<evidence type="ECO:0000305" key="3"/>
<proteinExistence type="inferred from homology"/>
<feature type="signal peptide" evidence="2">
    <location>
        <begin position="1"/>
        <end position="50"/>
    </location>
</feature>
<feature type="chain" id="PRO_0000149600" description="Outer capsid glycoprotein VP7" evidence="2">
    <location>
        <begin position="51"/>
        <end position="326"/>
    </location>
</feature>
<feature type="region of interest" description="CNP motif; interaction with ITGAV/ITGB3" evidence="2">
    <location>
        <begin position="165"/>
        <end position="167"/>
    </location>
</feature>
<feature type="region of interest" description="GPR motif; interaction with ITGAX/ITGB2" evidence="2">
    <location>
        <begin position="253"/>
        <end position="255"/>
    </location>
</feature>
<feature type="binding site" evidence="2">
    <location>
        <position position="95"/>
    </location>
    <ligand>
        <name>Ca(2+)</name>
        <dbReference type="ChEBI" id="CHEBI:29108"/>
        <label>1</label>
    </ligand>
</feature>
<feature type="binding site" evidence="2">
    <location>
        <position position="177"/>
    </location>
    <ligand>
        <name>Ca(2+)</name>
        <dbReference type="ChEBI" id="CHEBI:29108"/>
        <label>2</label>
    </ligand>
</feature>
<feature type="binding site" evidence="2">
    <location>
        <position position="206"/>
    </location>
    <ligand>
        <name>Ca(2+)</name>
        <dbReference type="ChEBI" id="CHEBI:29108"/>
        <label>1</label>
    </ligand>
</feature>
<feature type="binding site" evidence="2">
    <location>
        <position position="214"/>
    </location>
    <ligand>
        <name>Ca(2+)</name>
        <dbReference type="ChEBI" id="CHEBI:29108"/>
        <label>1</label>
    </ligand>
</feature>
<feature type="binding site" evidence="2">
    <location>
        <position position="216"/>
    </location>
    <ligand>
        <name>Ca(2+)</name>
        <dbReference type="ChEBI" id="CHEBI:29108"/>
        <label>1</label>
    </ligand>
</feature>
<feature type="binding site" evidence="2">
    <location>
        <position position="228"/>
    </location>
    <ligand>
        <name>Ca(2+)</name>
        <dbReference type="ChEBI" id="CHEBI:29108"/>
        <label>2</label>
    </ligand>
</feature>
<feature type="binding site" evidence="2">
    <location>
        <position position="229"/>
    </location>
    <ligand>
        <name>Ca(2+)</name>
        <dbReference type="ChEBI" id="CHEBI:29108"/>
        <label>2</label>
    </ligand>
</feature>
<feature type="binding site" evidence="2">
    <location>
        <position position="231"/>
    </location>
    <ligand>
        <name>Ca(2+)</name>
        <dbReference type="ChEBI" id="CHEBI:29108"/>
        <label>2</label>
    </ligand>
</feature>
<feature type="binding site" evidence="2">
    <location>
        <position position="301"/>
    </location>
    <ligand>
        <name>Ca(2+)</name>
        <dbReference type="ChEBI" id="CHEBI:29108"/>
        <label>2</label>
    </ligand>
</feature>
<feature type="glycosylation site" description="N-linked (GlcNAc...) asparagine; by host" evidence="1">
    <location>
        <position position="69"/>
    </location>
</feature>
<feature type="glycosylation site" description="N-linked (GlcNAc...) asparagine; by host" evidence="1">
    <location>
        <position position="238"/>
    </location>
</feature>
<feature type="disulfide bond" evidence="2">
    <location>
        <begin position="82"/>
        <end position="135"/>
    </location>
</feature>
<feature type="disulfide bond" evidence="2">
    <location>
        <begin position="165"/>
        <end position="249"/>
    </location>
</feature>
<feature type="disulfide bond" evidence="2">
    <location>
        <begin position="191"/>
        <end position="244"/>
    </location>
</feature>
<feature type="disulfide bond" evidence="2">
    <location>
        <begin position="196"/>
        <end position="207"/>
    </location>
</feature>
<feature type="splice variant" id="VSP_038634" description="In isoform 2." evidence="3">
    <location>
        <begin position="1"/>
        <end position="29"/>
    </location>
</feature>
<reference key="1">
    <citation type="journal article" date="1987" name="Virology">
        <title>Comparison of the amino acid sequences of the major neutralization protein of four human rotavirus serotypes.</title>
        <authorList>
            <person name="Green K.Y."/>
            <person name="Midthun K."/>
            <person name="Gorziglia M."/>
            <person name="Hoshino Y."/>
            <person name="Kapikian A.Z."/>
            <person name="Chanock R.M."/>
            <person name="Flores J."/>
        </authorList>
    </citation>
    <scope>NUCLEOTIDE SEQUENCE</scope>
</reference>
<organism>
    <name type="scientific">Rotavirus A (strain RVA/Human/Venezuela/M37/1982/G1P2A[6])</name>
    <name type="common">RV-A</name>
    <dbReference type="NCBI Taxonomy" id="10954"/>
    <lineage>
        <taxon>Viruses</taxon>
        <taxon>Riboviria</taxon>
        <taxon>Orthornavirae</taxon>
        <taxon>Duplornaviricota</taxon>
        <taxon>Resentoviricetes</taxon>
        <taxon>Reovirales</taxon>
        <taxon>Sedoreoviridae</taxon>
        <taxon>Rotavirus</taxon>
        <taxon>Rotavirus A</taxon>
    </lineage>
</organism>
<name>VP7_ROTHM</name>
<accession>P11852</accession>
<comment type="function">
    <text evidence="2">Calcium-binding protein that interacts with rotavirus cell receptors once the initial attachment by VP4 has been achieved. Rotavirus attachment and entry into the host cell probably involves multiple sequential contacts between the outer capsid proteins VP4 and VP7, and the cell receptors. Following entry into the host cell, low intracellular or intravesicular Ca(2+) concentration probably causes the calcium-stabilized VP7 trimers to dissociate from the virion. This step is probably necessary for the membrane-disrupting entry step and the release of VP4, which is locked onto the virion by VP7.</text>
</comment>
<comment type="subunit">
    <text evidence="2">Homotrimer; disulfide-linked. 2 Ca(2+) ions bound at each subunit interface in the trimer hold the trimer together. Interacts with the intermediate capsid protein VP6. Interacts with the outer capsid protein VP5*.</text>
</comment>
<comment type="subcellular location">
    <subcellularLocation>
        <location evidence="2">Virion</location>
    </subcellularLocation>
    <subcellularLocation>
        <location evidence="2">Host endoplasmic reticulum lumen</location>
    </subcellularLocation>
    <text evidence="2">The outer layer contains 780 copies of VP7, grouped as 260 trimers. Immature double-layered particles assembled in the cytoplasm bud across the membrane of the endoplasmic reticulum, acquiring during this process a transient lipid membrane that is modified with the ER resident viral glycoproteins NSP4 and VP7; these enveloped particles also contain VP4. As the particles move towards the interior of the ER cisternae, the transient lipid membrane and the non-structural protein NSP4 are lost, while the virus surface proteins VP4 and VP7 rearrange to form the outermost virus protein layer, yielding mature infectious triple-layered particles.</text>
</comment>
<comment type="alternative products">
    <event type="alternative initiation"/>
    <isoform>
        <id>P11852-1</id>
        <name>1</name>
        <sequence type="displayed"/>
    </isoform>
    <isoform>
        <id>P11852-2</id>
        <name>2</name>
        <sequence type="described" ref="VSP_038634"/>
    </isoform>
</comment>
<comment type="PTM">
    <text evidence="2">N-glycosylated.</text>
</comment>
<comment type="PTM">
    <text evidence="2">The N-terminus is blocked possibly by pyroglutamic acid.</text>
</comment>
<comment type="miscellaneous">
    <text evidence="2">Some rotavirus strains are neuraminidase-sensitive and require sialic acid to attach to the cell surface. Some rotavirus strains are integrin-dependent. Some rotavirus strains depend on ganglioside for their entry into the host cell. Hsp70 also seems to be involved in the entry of some strains.</text>
</comment>
<comment type="miscellaneous">
    <text evidence="2">In group A rotaviruses, VP7 defines the G serotype.</text>
</comment>
<comment type="miscellaneous">
    <molecule>Isoform 2</molecule>
    <text evidence="3">Produced by alternative initiation at Met-30 of isoform 1.</text>
</comment>
<comment type="similarity">
    <text evidence="2">Belongs to the rotavirus VP7 family.</text>
</comment>